<name>MOCS3_DROSE</name>
<organism>
    <name type="scientific">Drosophila sechellia</name>
    <name type="common">Fruit fly</name>
    <dbReference type="NCBI Taxonomy" id="7238"/>
    <lineage>
        <taxon>Eukaryota</taxon>
        <taxon>Metazoa</taxon>
        <taxon>Ecdysozoa</taxon>
        <taxon>Arthropoda</taxon>
        <taxon>Hexapoda</taxon>
        <taxon>Insecta</taxon>
        <taxon>Pterygota</taxon>
        <taxon>Neoptera</taxon>
        <taxon>Endopterygota</taxon>
        <taxon>Diptera</taxon>
        <taxon>Brachycera</taxon>
        <taxon>Muscomorpha</taxon>
        <taxon>Ephydroidea</taxon>
        <taxon>Drosophilidae</taxon>
        <taxon>Drosophila</taxon>
        <taxon>Sophophora</taxon>
    </lineage>
</organism>
<proteinExistence type="inferred from homology"/>
<accession>B4HYP0</accession>
<feature type="chain" id="PRO_0000369209" description="Adenylyltransferase and sulfurtransferase MOCS3">
    <location>
        <begin position="1"/>
        <end position="453"/>
    </location>
</feature>
<feature type="domain" description="Rhodanese" evidence="4">
    <location>
        <begin position="355"/>
        <end position="451"/>
    </location>
</feature>
<feature type="active site" description="Glycyl thioester intermediate; for adenylyltransferase activity" evidence="4">
    <location>
        <position position="248"/>
    </location>
</feature>
<feature type="active site" description="Cysteine persulfide intermediate; for sulfurtransferase activity" evidence="4">
    <location>
        <position position="410"/>
    </location>
</feature>
<feature type="binding site" evidence="4">
    <location>
        <position position="101"/>
    </location>
    <ligand>
        <name>ATP</name>
        <dbReference type="ChEBI" id="CHEBI:30616"/>
    </ligand>
</feature>
<feature type="binding site" evidence="4">
    <location>
        <position position="122"/>
    </location>
    <ligand>
        <name>ATP</name>
        <dbReference type="ChEBI" id="CHEBI:30616"/>
    </ligand>
</feature>
<feature type="binding site" evidence="4">
    <location>
        <begin position="129"/>
        <end position="133"/>
    </location>
    <ligand>
        <name>ATP</name>
        <dbReference type="ChEBI" id="CHEBI:30616"/>
    </ligand>
</feature>
<feature type="binding site" evidence="4">
    <location>
        <position position="146"/>
    </location>
    <ligand>
        <name>ATP</name>
        <dbReference type="ChEBI" id="CHEBI:30616"/>
    </ligand>
</feature>
<feature type="binding site" evidence="4">
    <location>
        <begin position="190"/>
        <end position="191"/>
    </location>
    <ligand>
        <name>ATP</name>
        <dbReference type="ChEBI" id="CHEBI:30616"/>
    </ligand>
</feature>
<feature type="binding site" evidence="4">
    <location>
        <position position="231"/>
    </location>
    <ligand>
        <name>Zn(2+)</name>
        <dbReference type="ChEBI" id="CHEBI:29105"/>
    </ligand>
</feature>
<feature type="binding site" evidence="4">
    <location>
        <position position="234"/>
    </location>
    <ligand>
        <name>Zn(2+)</name>
        <dbReference type="ChEBI" id="CHEBI:29105"/>
    </ligand>
</feature>
<feature type="binding site" evidence="4">
    <location>
        <position position="306"/>
    </location>
    <ligand>
        <name>Zn(2+)</name>
        <dbReference type="ChEBI" id="CHEBI:29105"/>
    </ligand>
</feature>
<feature type="binding site" evidence="4">
    <location>
        <position position="309"/>
    </location>
    <ligand>
        <name>Zn(2+)</name>
        <dbReference type="ChEBI" id="CHEBI:29105"/>
    </ligand>
</feature>
<feature type="modified residue" description="Phosphothreonine" evidence="1">
    <location>
        <position position="62"/>
    </location>
</feature>
<keyword id="KW-0067">ATP-binding</keyword>
<keyword id="KW-0963">Cytoplasm</keyword>
<keyword id="KW-0479">Metal-binding</keyword>
<keyword id="KW-0501">Molybdenum cofactor biosynthesis</keyword>
<keyword id="KW-0511">Multifunctional enzyme</keyword>
<keyword id="KW-0547">Nucleotide-binding</keyword>
<keyword id="KW-0548">Nucleotidyltransferase</keyword>
<keyword id="KW-0597">Phosphoprotein</keyword>
<keyword id="KW-1185">Reference proteome</keyword>
<keyword id="KW-0808">Transferase</keyword>
<keyword id="KW-0819">tRNA processing</keyword>
<keyword id="KW-0862">Zinc</keyword>
<gene>
    <name evidence="3" type="primary">Uba4</name>
    <name type="ORF">GM17034</name>
</gene>
<comment type="function">
    <text evidence="4">Plays a central role in 2-thiolation of mcm(5)S(2)U at tRNA wobble positions of cytosolic tRNA(Lys), tRNA(Glu) and tRNA(Gln). Also essential during biosynthesis of the molybdenum cofactor. Acts by mediating the C-terminal thiocarboxylation of sulfur carriers URM1 and MOCS2A. Its N-terminus first activates URM1 and MOCS2A as acyl-adenylates (-COAMP), then the persulfide sulfur on the catalytic cysteine is transferred to URM1 and MOCS2A to form thiocarboxylation (-COSH) of their C-terminus. The reaction probably involves hydrogen sulfide that is generated from the persulfide intermediate and that acts as a nucleophile towards URM1 and MOCS2A. Subsequently, a transient disulfide bond is formed. Does not use thiosulfate as sulfur donor; NFS1 probably acting as a sulfur donor for thiocarboxylation reactions.</text>
</comment>
<comment type="catalytic activity">
    <reaction evidence="4">
        <text>[molybdopterin-synthase sulfur-carrier protein]-C-terminal Gly-Gly + ATP + H(+) = [molybdopterin-synthase sulfur-carrier protein]-C-terminal Gly-Gly-AMP + diphosphate</text>
        <dbReference type="Rhea" id="RHEA:43616"/>
        <dbReference type="Rhea" id="RHEA-COMP:12159"/>
        <dbReference type="Rhea" id="RHEA-COMP:12202"/>
        <dbReference type="ChEBI" id="CHEBI:15378"/>
        <dbReference type="ChEBI" id="CHEBI:30616"/>
        <dbReference type="ChEBI" id="CHEBI:33019"/>
        <dbReference type="ChEBI" id="CHEBI:90618"/>
        <dbReference type="ChEBI" id="CHEBI:90778"/>
        <dbReference type="EC" id="2.7.7.80"/>
    </reaction>
</comment>
<comment type="catalytic activity">
    <reaction evidence="4">
        <text>[molybdopterin-synthase sulfur-carrier protein]-C-terminal Gly-Gly-AMP + S-sulfanyl-L-cysteinyl-[cysteine desulfurase] + AH2 = [molybdopterin-synthase sulfur-carrier protein]-C-terminal-Gly-aminoethanethioate + L-cysteinyl-[cysteine desulfurase] + A + AMP + 2 H(+)</text>
        <dbReference type="Rhea" id="RHEA:48612"/>
        <dbReference type="Rhea" id="RHEA-COMP:12157"/>
        <dbReference type="Rhea" id="RHEA-COMP:12158"/>
        <dbReference type="Rhea" id="RHEA-COMP:12159"/>
        <dbReference type="Rhea" id="RHEA-COMP:19907"/>
        <dbReference type="ChEBI" id="CHEBI:13193"/>
        <dbReference type="ChEBI" id="CHEBI:15378"/>
        <dbReference type="ChEBI" id="CHEBI:17499"/>
        <dbReference type="ChEBI" id="CHEBI:29950"/>
        <dbReference type="ChEBI" id="CHEBI:61963"/>
        <dbReference type="ChEBI" id="CHEBI:90618"/>
        <dbReference type="ChEBI" id="CHEBI:232372"/>
        <dbReference type="ChEBI" id="CHEBI:456215"/>
        <dbReference type="EC" id="2.8.1.11"/>
    </reaction>
</comment>
<comment type="cofactor">
    <cofactor evidence="4">
        <name>Zn(2+)</name>
        <dbReference type="ChEBI" id="CHEBI:29105"/>
    </cofactor>
    <text evidence="4">Binds 1 zinc ion per subunit.</text>
</comment>
<comment type="pathway">
    <text evidence="4">tRNA modification; 5-methoxycarbonylmethyl-2-thiouridine-tRNA biosynthesis.</text>
</comment>
<comment type="pathway">
    <text evidence="4">Cofactor biosynthesis; molybdopterin biosynthesis.</text>
</comment>
<comment type="subcellular location">
    <subcellularLocation>
        <location evidence="2">Cytoplasm</location>
        <location evidence="2">Cytosol</location>
    </subcellularLocation>
</comment>
<comment type="similarity">
    <text evidence="4">In the N-terminal section; belongs to the HesA/MoeB/ThiF family. UBA4 subfamily.</text>
</comment>
<protein>
    <recommendedName>
        <fullName evidence="4">Adenylyltransferase and sulfurtransferase MOCS3</fullName>
    </recommendedName>
    <alternativeName>
        <fullName evidence="4">Molybdenum cofactor synthesis protein 3</fullName>
    </alternativeName>
    <alternativeName>
        <fullName evidence="3">Ubiquitin activating enzyme 4</fullName>
    </alternativeName>
    <domain>
        <recommendedName>
            <fullName evidence="4">Molybdopterin-synthase adenylyltransferase</fullName>
            <ecNumber evidence="4">2.7.7.80</ecNumber>
        </recommendedName>
        <alternativeName>
            <fullName evidence="4">Adenylyltransferase MOCS3</fullName>
        </alternativeName>
        <alternativeName>
            <fullName evidence="4">Sulfur carrier protein MOCS2A adenylyltransferase</fullName>
        </alternativeName>
    </domain>
    <domain>
        <recommendedName>
            <fullName evidence="4">Molybdopterin-synthase sulfurtransferase</fullName>
            <ecNumber evidence="4">2.8.1.11</ecNumber>
        </recommendedName>
        <alternativeName>
            <fullName evidence="4">Sulfur carrier protein MOCS2A sulfurtransferase</fullName>
        </alternativeName>
        <alternativeName>
            <fullName evidence="4">Sulfurtransferase MOCS3</fullName>
        </alternativeName>
    </domain>
</protein>
<dbReference type="EC" id="2.7.7.80" evidence="4"/>
<dbReference type="EC" id="2.8.1.11" evidence="4"/>
<dbReference type="EMBL" id="CH480818">
    <property type="protein sequence ID" value="EDW52170.1"/>
    <property type="molecule type" value="Genomic_DNA"/>
</dbReference>
<dbReference type="SMR" id="B4HYP0"/>
<dbReference type="STRING" id="7238.B4HYP0"/>
<dbReference type="EnsemblMetazoa" id="FBtr0200019">
    <property type="protein sequence ID" value="FBpp0198511"/>
    <property type="gene ID" value="FBgn0171946"/>
</dbReference>
<dbReference type="EnsemblMetazoa" id="XM_002036211.2">
    <property type="protein sequence ID" value="XP_002036247.1"/>
    <property type="gene ID" value="LOC6611714"/>
</dbReference>
<dbReference type="GeneID" id="6611714"/>
<dbReference type="KEGG" id="dse:6611714"/>
<dbReference type="CTD" id="34187"/>
<dbReference type="HOGENOM" id="CLU_013325_1_2_1"/>
<dbReference type="OMA" id="IPDVGMD"/>
<dbReference type="OrthoDB" id="8445at7215"/>
<dbReference type="PhylomeDB" id="B4HYP0"/>
<dbReference type="UniPathway" id="UPA00344"/>
<dbReference type="UniPathway" id="UPA00988"/>
<dbReference type="Proteomes" id="UP000001292">
    <property type="component" value="Unassembled WGS sequence"/>
</dbReference>
<dbReference type="GO" id="GO:0005829">
    <property type="term" value="C:cytosol"/>
    <property type="evidence" value="ECO:0000250"/>
    <property type="project" value="UniProtKB"/>
</dbReference>
<dbReference type="GO" id="GO:0005524">
    <property type="term" value="F:ATP binding"/>
    <property type="evidence" value="ECO:0007669"/>
    <property type="project" value="UniProtKB-KW"/>
</dbReference>
<dbReference type="GO" id="GO:0046872">
    <property type="term" value="F:metal ion binding"/>
    <property type="evidence" value="ECO:0007669"/>
    <property type="project" value="UniProtKB-KW"/>
</dbReference>
<dbReference type="GO" id="GO:0061605">
    <property type="term" value="F:molybdopterin-synthase adenylyltransferase activity"/>
    <property type="evidence" value="ECO:0007669"/>
    <property type="project" value="UniProtKB-EC"/>
</dbReference>
<dbReference type="GO" id="GO:0061604">
    <property type="term" value="F:molybdopterin-synthase sulfurtransferase activity"/>
    <property type="evidence" value="ECO:0000250"/>
    <property type="project" value="UniProtKB"/>
</dbReference>
<dbReference type="GO" id="GO:0004792">
    <property type="term" value="F:thiosulfate-cyanide sulfurtransferase activity"/>
    <property type="evidence" value="ECO:0007669"/>
    <property type="project" value="TreeGrafter"/>
</dbReference>
<dbReference type="GO" id="GO:0042292">
    <property type="term" value="F:URM1 activating enzyme activity"/>
    <property type="evidence" value="ECO:0007669"/>
    <property type="project" value="TreeGrafter"/>
</dbReference>
<dbReference type="GO" id="GO:0006777">
    <property type="term" value="P:Mo-molybdopterin cofactor biosynthetic process"/>
    <property type="evidence" value="ECO:0000250"/>
    <property type="project" value="UniProtKB"/>
</dbReference>
<dbReference type="GO" id="GO:0032447">
    <property type="term" value="P:protein urmylation"/>
    <property type="evidence" value="ECO:0007669"/>
    <property type="project" value="EnsemblMetazoa"/>
</dbReference>
<dbReference type="GO" id="GO:0002143">
    <property type="term" value="P:tRNA wobble position uridine thiolation"/>
    <property type="evidence" value="ECO:0007669"/>
    <property type="project" value="InterPro"/>
</dbReference>
<dbReference type="CDD" id="cd01526">
    <property type="entry name" value="RHOD_ThiF"/>
    <property type="match status" value="1"/>
</dbReference>
<dbReference type="CDD" id="cd00757">
    <property type="entry name" value="ThiF_MoeB_HesA_family"/>
    <property type="match status" value="1"/>
</dbReference>
<dbReference type="FunFam" id="3.40.250.10:FF:000014">
    <property type="entry name" value="Adenylyltransferase and sulfurtransferase MOCS3"/>
    <property type="match status" value="1"/>
</dbReference>
<dbReference type="FunFam" id="3.40.50.720:FF:000206">
    <property type="entry name" value="Adenylyltransferase and sulfurtransferase MOCS3"/>
    <property type="match status" value="1"/>
</dbReference>
<dbReference type="Gene3D" id="3.40.50.720">
    <property type="entry name" value="NAD(P)-binding Rossmann-like Domain"/>
    <property type="match status" value="1"/>
</dbReference>
<dbReference type="Gene3D" id="3.40.250.10">
    <property type="entry name" value="Rhodanese-like domain"/>
    <property type="match status" value="1"/>
</dbReference>
<dbReference type="HAMAP" id="MF_03049">
    <property type="entry name" value="MOCS3_Uba4"/>
    <property type="match status" value="1"/>
</dbReference>
<dbReference type="InterPro" id="IPR028885">
    <property type="entry name" value="MOCS3/Uba4"/>
</dbReference>
<dbReference type="InterPro" id="IPR001763">
    <property type="entry name" value="Rhodanese-like_dom"/>
</dbReference>
<dbReference type="InterPro" id="IPR036873">
    <property type="entry name" value="Rhodanese-like_dom_sf"/>
</dbReference>
<dbReference type="InterPro" id="IPR045886">
    <property type="entry name" value="ThiF/MoeB/HesA"/>
</dbReference>
<dbReference type="InterPro" id="IPR000594">
    <property type="entry name" value="ThiF_NAD_FAD-bd"/>
</dbReference>
<dbReference type="InterPro" id="IPR035985">
    <property type="entry name" value="Ubiquitin-activating_enz"/>
</dbReference>
<dbReference type="NCBIfam" id="NF004281">
    <property type="entry name" value="PRK05690.1"/>
    <property type="match status" value="1"/>
</dbReference>
<dbReference type="PANTHER" id="PTHR10953:SF102">
    <property type="entry name" value="ADENYLYLTRANSFERASE AND SULFURTRANSFERASE MOCS3"/>
    <property type="match status" value="1"/>
</dbReference>
<dbReference type="PANTHER" id="PTHR10953">
    <property type="entry name" value="UBIQUITIN-ACTIVATING ENZYME E1"/>
    <property type="match status" value="1"/>
</dbReference>
<dbReference type="Pfam" id="PF00581">
    <property type="entry name" value="Rhodanese"/>
    <property type="match status" value="1"/>
</dbReference>
<dbReference type="Pfam" id="PF00899">
    <property type="entry name" value="ThiF"/>
    <property type="match status" value="1"/>
</dbReference>
<dbReference type="SMART" id="SM00450">
    <property type="entry name" value="RHOD"/>
    <property type="match status" value="1"/>
</dbReference>
<dbReference type="SUPFAM" id="SSF69572">
    <property type="entry name" value="Activating enzymes of the ubiquitin-like proteins"/>
    <property type="match status" value="1"/>
</dbReference>
<dbReference type="PROSITE" id="PS50206">
    <property type="entry name" value="RHODANESE_3"/>
    <property type="match status" value="1"/>
</dbReference>
<sequence>MMESAVDSERTMLKREIADLRAALNQKEQCLRELEDSVSFATRSEQEVVGNDLESPGGAVHTKLTNDDIARYSRQLILPDFGVQGQLKLKNSSVLIVGMGGLGCPAAQYLAAAGCGHLGLVDYDEVERSNFHRQILHSEDRCGMSKAESARIALNELNPHCEIHCHSRMLYPHNAMHIIRGYDVVLDCTDNVPTRYLLSDACVMLNKPLVSGSALKMDGQLTVYNYGNGPCYRCIFPVPPPPEAVTNCGDGGVLGAVTGTIGAMQALEAIKVIVGMGDVLAGRLLIFDGSSCVFRNIRIRSKRPNCHMCSAQPLITELINYEMFCGMHATDKNNPTLLFSTDERLSVEEYHRKIQAKPHLLIDVRPTAEFEICQLPEAVNVPLVEILDDSYLKRLGKQLEDKELPVVLLCRRGNDSQIAVQHLRNRFPKHFVRDLIGGLHAWTSNIDPNFPIY</sequence>
<evidence type="ECO:0000250" key="1"/>
<evidence type="ECO:0000250" key="2">
    <source>
        <dbReference type="UniProtKB" id="O95396"/>
    </source>
</evidence>
<evidence type="ECO:0000250" key="3">
    <source>
        <dbReference type="UniProtKB" id="Q9VLJ8"/>
    </source>
</evidence>
<evidence type="ECO:0000255" key="4">
    <source>
        <dbReference type="HAMAP-Rule" id="MF_03049"/>
    </source>
</evidence>
<reference key="1">
    <citation type="journal article" date="2007" name="Nature">
        <title>Evolution of genes and genomes on the Drosophila phylogeny.</title>
        <authorList>
            <consortium name="Drosophila 12 genomes consortium"/>
        </authorList>
    </citation>
    <scope>NUCLEOTIDE SEQUENCE [LARGE SCALE GENOMIC DNA]</scope>
    <source>
        <strain>Rob3c / Tucson 14021-0248.25</strain>
    </source>
</reference>